<accession>Q92M59</accession>
<sequence length="90" mass="10196">MSDAHGIARDQLRAFIERIERLEEEKKTIADDIKDVYGEAKSMGFDAKILRKVISIRKQDADERMEQEAILDTYLQALGMIPAVEAEDAA</sequence>
<comment type="similarity">
    <text evidence="1">Belongs to the UPF0335 family.</text>
</comment>
<protein>
    <recommendedName>
        <fullName evidence="1">UPF0335 protein R02793</fullName>
    </recommendedName>
</protein>
<feature type="chain" id="PRO_0000219929" description="UPF0335 protein R02793">
    <location>
        <begin position="1"/>
        <end position="90"/>
    </location>
</feature>
<reference key="1">
    <citation type="journal article" date="2001" name="Proc. Natl. Acad. Sci. U.S.A.">
        <title>Analysis of the chromosome sequence of the legume symbiont Sinorhizobium meliloti strain 1021.</title>
        <authorList>
            <person name="Capela D."/>
            <person name="Barloy-Hubler F."/>
            <person name="Gouzy J."/>
            <person name="Bothe G."/>
            <person name="Ampe F."/>
            <person name="Batut J."/>
            <person name="Boistard P."/>
            <person name="Becker A."/>
            <person name="Boutry M."/>
            <person name="Cadieu E."/>
            <person name="Dreano S."/>
            <person name="Gloux S."/>
            <person name="Godrie T."/>
            <person name="Goffeau A."/>
            <person name="Kahn D."/>
            <person name="Kiss E."/>
            <person name="Lelaure V."/>
            <person name="Masuy D."/>
            <person name="Pohl T."/>
            <person name="Portetelle D."/>
            <person name="Puehler A."/>
            <person name="Purnelle B."/>
            <person name="Ramsperger U."/>
            <person name="Renard C."/>
            <person name="Thebault P."/>
            <person name="Vandenbol M."/>
            <person name="Weidner S."/>
            <person name="Galibert F."/>
        </authorList>
    </citation>
    <scope>NUCLEOTIDE SEQUENCE [LARGE SCALE GENOMIC DNA]</scope>
    <source>
        <strain>1021</strain>
    </source>
</reference>
<reference key="2">
    <citation type="journal article" date="2001" name="Science">
        <title>The composite genome of the legume symbiont Sinorhizobium meliloti.</title>
        <authorList>
            <person name="Galibert F."/>
            <person name="Finan T.M."/>
            <person name="Long S.R."/>
            <person name="Puehler A."/>
            <person name="Abola P."/>
            <person name="Ampe F."/>
            <person name="Barloy-Hubler F."/>
            <person name="Barnett M.J."/>
            <person name="Becker A."/>
            <person name="Boistard P."/>
            <person name="Bothe G."/>
            <person name="Boutry M."/>
            <person name="Bowser L."/>
            <person name="Buhrmester J."/>
            <person name="Cadieu E."/>
            <person name="Capela D."/>
            <person name="Chain P."/>
            <person name="Cowie A."/>
            <person name="Davis R.W."/>
            <person name="Dreano S."/>
            <person name="Federspiel N.A."/>
            <person name="Fisher R.F."/>
            <person name="Gloux S."/>
            <person name="Godrie T."/>
            <person name="Goffeau A."/>
            <person name="Golding B."/>
            <person name="Gouzy J."/>
            <person name="Gurjal M."/>
            <person name="Hernandez-Lucas I."/>
            <person name="Hong A."/>
            <person name="Huizar L."/>
            <person name="Hyman R.W."/>
            <person name="Jones T."/>
            <person name="Kahn D."/>
            <person name="Kahn M.L."/>
            <person name="Kalman S."/>
            <person name="Keating D.H."/>
            <person name="Kiss E."/>
            <person name="Komp C."/>
            <person name="Lelaure V."/>
            <person name="Masuy D."/>
            <person name="Palm C."/>
            <person name="Peck M.C."/>
            <person name="Pohl T.M."/>
            <person name="Portetelle D."/>
            <person name="Purnelle B."/>
            <person name="Ramsperger U."/>
            <person name="Surzycki R."/>
            <person name="Thebault P."/>
            <person name="Vandenbol M."/>
            <person name="Vorhoelter F.J."/>
            <person name="Weidner S."/>
            <person name="Wells D.H."/>
            <person name="Wong K."/>
            <person name="Yeh K.-C."/>
            <person name="Batut J."/>
        </authorList>
    </citation>
    <scope>NUCLEOTIDE SEQUENCE [LARGE SCALE GENOMIC DNA]</scope>
    <source>
        <strain>1021</strain>
    </source>
</reference>
<keyword id="KW-1185">Reference proteome</keyword>
<organism>
    <name type="scientific">Rhizobium meliloti (strain 1021)</name>
    <name type="common">Ensifer meliloti</name>
    <name type="synonym">Sinorhizobium meliloti</name>
    <dbReference type="NCBI Taxonomy" id="266834"/>
    <lineage>
        <taxon>Bacteria</taxon>
        <taxon>Pseudomonadati</taxon>
        <taxon>Pseudomonadota</taxon>
        <taxon>Alphaproteobacteria</taxon>
        <taxon>Hyphomicrobiales</taxon>
        <taxon>Rhizobiaceae</taxon>
        <taxon>Sinorhizobium/Ensifer group</taxon>
        <taxon>Sinorhizobium</taxon>
    </lineage>
</organism>
<gene>
    <name type="ordered locus">R02793</name>
    <name type="ORF">SMc04009</name>
</gene>
<evidence type="ECO:0000255" key="1">
    <source>
        <dbReference type="HAMAP-Rule" id="MF_00797"/>
    </source>
</evidence>
<dbReference type="EMBL" id="AL591688">
    <property type="protein sequence ID" value="CAC47372.1"/>
    <property type="molecule type" value="Genomic_DNA"/>
</dbReference>
<dbReference type="RefSeq" id="NP_386899.1">
    <property type="nucleotide sequence ID" value="NC_003047.1"/>
</dbReference>
<dbReference type="RefSeq" id="WP_010970195.1">
    <property type="nucleotide sequence ID" value="NC_003047.1"/>
</dbReference>
<dbReference type="SMR" id="Q92M59"/>
<dbReference type="EnsemblBacteria" id="CAC47372">
    <property type="protein sequence ID" value="CAC47372"/>
    <property type="gene ID" value="SMc04009"/>
</dbReference>
<dbReference type="KEGG" id="sme:SMc04009"/>
<dbReference type="PATRIC" id="fig|266834.11.peg.4305"/>
<dbReference type="eggNOG" id="COG3750">
    <property type="taxonomic scope" value="Bacteria"/>
</dbReference>
<dbReference type="HOGENOM" id="CLU_158651_3_0_5"/>
<dbReference type="OrthoDB" id="9813793at2"/>
<dbReference type="Proteomes" id="UP000001976">
    <property type="component" value="Chromosome"/>
</dbReference>
<dbReference type="GO" id="GO:0003677">
    <property type="term" value="F:DNA binding"/>
    <property type="evidence" value="ECO:0007669"/>
    <property type="project" value="InterPro"/>
</dbReference>
<dbReference type="HAMAP" id="MF_00797">
    <property type="entry name" value="UPF0335"/>
    <property type="match status" value="1"/>
</dbReference>
<dbReference type="InterPro" id="IPR018753">
    <property type="entry name" value="GapR-like"/>
</dbReference>
<dbReference type="InterPro" id="IPR046367">
    <property type="entry name" value="GapR-like_DNA-bd"/>
</dbReference>
<dbReference type="NCBIfam" id="NF010247">
    <property type="entry name" value="PRK13694.1"/>
    <property type="match status" value="1"/>
</dbReference>
<dbReference type="Pfam" id="PF10073">
    <property type="entry name" value="GapR_DNA-bd"/>
    <property type="match status" value="1"/>
</dbReference>
<name>Y2793_RHIME</name>
<proteinExistence type="inferred from homology"/>